<feature type="chain" id="PRO_0000095564" description="Ferric uptake regulation protein">
    <location>
        <begin position="1"/>
        <end position="144"/>
    </location>
</feature>
<feature type="region of interest" description="DNA-binding" evidence="1">
    <location>
        <begin position="1"/>
        <end position="86"/>
    </location>
</feature>
<feature type="region of interest" description="Dimerization" evidence="1">
    <location>
        <begin position="87"/>
        <end position="144"/>
    </location>
</feature>
<feature type="binding site" evidence="1">
    <location>
        <position position="35"/>
    </location>
    <ligand>
        <name>Zn(2+)</name>
        <dbReference type="ChEBI" id="CHEBI:29105"/>
    </ligand>
</feature>
<feature type="binding site" evidence="1">
    <location>
        <position position="83"/>
    </location>
    <ligand>
        <name>Zn(2+)</name>
        <dbReference type="ChEBI" id="CHEBI:29105"/>
    </ligand>
</feature>
<feature type="binding site" evidence="1">
    <location>
        <position position="89"/>
    </location>
    <ligand>
        <name>Fe cation</name>
        <dbReference type="ChEBI" id="CHEBI:24875"/>
    </ligand>
</feature>
<feature type="binding site" evidence="1">
    <location>
        <position position="91"/>
    </location>
    <ligand>
        <name>Fe cation</name>
        <dbReference type="ChEBI" id="CHEBI:24875"/>
    </ligand>
</feature>
<feature type="binding site" evidence="1">
    <location>
        <position position="92"/>
    </location>
    <ligand>
        <name>Zn(2+)</name>
        <dbReference type="ChEBI" id="CHEBI:29105"/>
    </ligand>
</feature>
<feature type="binding site" evidence="1">
    <location>
        <position position="95"/>
    </location>
    <ligand>
        <name>Zn(2+)</name>
        <dbReference type="ChEBI" id="CHEBI:29105"/>
    </ligand>
</feature>
<feature type="binding site" evidence="1">
    <location>
        <position position="98"/>
    </location>
    <ligand>
        <name>Zn(2+)</name>
        <dbReference type="ChEBI" id="CHEBI:29105"/>
    </ligand>
</feature>
<feature type="binding site" evidence="1">
    <location>
        <position position="103"/>
    </location>
    <ligand>
        <name>Zn(2+)</name>
        <dbReference type="ChEBI" id="CHEBI:29105"/>
    </ligand>
</feature>
<feature type="binding site" evidence="1">
    <location>
        <position position="110"/>
    </location>
    <ligand>
        <name>Fe cation</name>
        <dbReference type="ChEBI" id="CHEBI:24875"/>
    </ligand>
</feature>
<feature type="binding site" evidence="1">
    <location>
        <position position="127"/>
    </location>
    <ligand>
        <name>Fe cation</name>
        <dbReference type="ChEBI" id="CHEBI:24875"/>
    </ligand>
</feature>
<proteinExistence type="inferred from homology"/>
<name>FUR_NEIMA</name>
<comment type="function">
    <text evidence="1">Acts as a global negative controlling element, employing Fe(2+) as a cofactor to bind the operator of the repressed genes. Regulates the expression of the fbp protein (By similarity).</text>
</comment>
<comment type="subunit">
    <text evidence="1">Homodimer.</text>
</comment>
<comment type="subcellular location">
    <subcellularLocation>
        <location evidence="1">Cytoplasm</location>
    </subcellularLocation>
</comment>
<comment type="similarity">
    <text evidence="2">Belongs to the Fur family.</text>
</comment>
<keyword id="KW-0963">Cytoplasm</keyword>
<keyword id="KW-0238">DNA-binding</keyword>
<keyword id="KW-0408">Iron</keyword>
<keyword id="KW-0479">Metal-binding</keyword>
<keyword id="KW-0678">Repressor</keyword>
<keyword id="KW-0804">Transcription</keyword>
<keyword id="KW-0805">Transcription regulation</keyword>
<keyword id="KW-0862">Zinc</keyword>
<organism>
    <name type="scientific">Neisseria meningitidis serogroup A / serotype 4A (strain DSM 15465 / Z2491)</name>
    <dbReference type="NCBI Taxonomy" id="122587"/>
    <lineage>
        <taxon>Bacteria</taxon>
        <taxon>Pseudomonadati</taxon>
        <taxon>Pseudomonadota</taxon>
        <taxon>Betaproteobacteria</taxon>
        <taxon>Neisseriales</taxon>
        <taxon>Neisseriaceae</taxon>
        <taxon>Neisseria</taxon>
    </lineage>
</organism>
<accession>P0A0S7</accession>
<accession>A1INS7</accession>
<accession>Q57298</accession>
<evidence type="ECO:0000250" key="1"/>
<evidence type="ECO:0000305" key="2"/>
<gene>
    <name type="primary">fur</name>
    <name type="ordered locus">NMA0064</name>
</gene>
<protein>
    <recommendedName>
        <fullName>Ferric uptake regulation protein</fullName>
        <shortName>Ferric uptake regulator</shortName>
    </recommendedName>
</protein>
<reference key="1">
    <citation type="journal article" date="2000" name="Nature">
        <title>Complete DNA sequence of a serogroup A strain of Neisseria meningitidis Z2491.</title>
        <authorList>
            <person name="Parkhill J."/>
            <person name="Achtman M."/>
            <person name="James K.D."/>
            <person name="Bentley S.D."/>
            <person name="Churcher C.M."/>
            <person name="Klee S.R."/>
            <person name="Morelli G."/>
            <person name="Basham D."/>
            <person name="Brown D."/>
            <person name="Chillingworth T."/>
            <person name="Davies R.M."/>
            <person name="Davis P."/>
            <person name="Devlin K."/>
            <person name="Feltwell T."/>
            <person name="Hamlin N."/>
            <person name="Holroyd S."/>
            <person name="Jagels K."/>
            <person name="Leather S."/>
            <person name="Moule S."/>
            <person name="Mungall K.L."/>
            <person name="Quail M.A."/>
            <person name="Rajandream M.A."/>
            <person name="Rutherford K.M."/>
            <person name="Simmonds M."/>
            <person name="Skelton J."/>
            <person name="Whitehead S."/>
            <person name="Spratt B.G."/>
            <person name="Barrell B.G."/>
        </authorList>
    </citation>
    <scope>NUCLEOTIDE SEQUENCE [LARGE SCALE GENOMIC DNA]</scope>
    <source>
        <strain>DSM 15465 / Z2491</strain>
    </source>
</reference>
<dbReference type="EMBL" id="AL157959">
    <property type="protein sequence ID" value="CAM07384.1"/>
    <property type="molecule type" value="Genomic_DNA"/>
</dbReference>
<dbReference type="PIR" id="G81226">
    <property type="entry name" value="G81226"/>
</dbReference>
<dbReference type="RefSeq" id="WP_002218609.1">
    <property type="nucleotide sequence ID" value="NC_003116.1"/>
</dbReference>
<dbReference type="SMR" id="P0A0S7"/>
<dbReference type="EnsemblBacteria" id="CAM07384">
    <property type="protein sequence ID" value="CAM07384"/>
    <property type="gene ID" value="NMA0064"/>
</dbReference>
<dbReference type="GeneID" id="93387283"/>
<dbReference type="KEGG" id="nma:NMA0064"/>
<dbReference type="HOGENOM" id="CLU_096072_3_3_4"/>
<dbReference type="Proteomes" id="UP000000626">
    <property type="component" value="Chromosome"/>
</dbReference>
<dbReference type="GO" id="GO:0005829">
    <property type="term" value="C:cytosol"/>
    <property type="evidence" value="ECO:0007669"/>
    <property type="project" value="TreeGrafter"/>
</dbReference>
<dbReference type="GO" id="GO:0003700">
    <property type="term" value="F:DNA-binding transcription factor activity"/>
    <property type="evidence" value="ECO:0007669"/>
    <property type="project" value="InterPro"/>
</dbReference>
<dbReference type="GO" id="GO:0000976">
    <property type="term" value="F:transcription cis-regulatory region binding"/>
    <property type="evidence" value="ECO:0007669"/>
    <property type="project" value="TreeGrafter"/>
</dbReference>
<dbReference type="GO" id="GO:0008270">
    <property type="term" value="F:zinc ion binding"/>
    <property type="evidence" value="ECO:0007669"/>
    <property type="project" value="TreeGrafter"/>
</dbReference>
<dbReference type="GO" id="GO:0045892">
    <property type="term" value="P:negative regulation of DNA-templated transcription"/>
    <property type="evidence" value="ECO:0007669"/>
    <property type="project" value="TreeGrafter"/>
</dbReference>
<dbReference type="GO" id="GO:1900705">
    <property type="term" value="P:negative regulation of siderophore biosynthetic process"/>
    <property type="evidence" value="ECO:0007669"/>
    <property type="project" value="TreeGrafter"/>
</dbReference>
<dbReference type="CDD" id="cd07153">
    <property type="entry name" value="Fur_like"/>
    <property type="match status" value="1"/>
</dbReference>
<dbReference type="FunFam" id="1.10.10.10:FF:000007">
    <property type="entry name" value="Ferric uptake regulation protein"/>
    <property type="match status" value="1"/>
</dbReference>
<dbReference type="FunFam" id="3.30.1490.190:FF:000001">
    <property type="entry name" value="Ferric uptake regulation protein"/>
    <property type="match status" value="1"/>
</dbReference>
<dbReference type="Gene3D" id="3.30.1490.190">
    <property type="match status" value="1"/>
</dbReference>
<dbReference type="Gene3D" id="1.10.10.10">
    <property type="entry name" value="Winged helix-like DNA-binding domain superfamily/Winged helix DNA-binding domain"/>
    <property type="match status" value="1"/>
</dbReference>
<dbReference type="InterPro" id="IPR002481">
    <property type="entry name" value="FUR"/>
</dbReference>
<dbReference type="InterPro" id="IPR043135">
    <property type="entry name" value="Fur_C"/>
</dbReference>
<dbReference type="InterPro" id="IPR036388">
    <property type="entry name" value="WH-like_DNA-bd_sf"/>
</dbReference>
<dbReference type="InterPro" id="IPR036390">
    <property type="entry name" value="WH_DNA-bd_sf"/>
</dbReference>
<dbReference type="NCBIfam" id="NF006999">
    <property type="entry name" value="PRK09462.1"/>
    <property type="match status" value="1"/>
</dbReference>
<dbReference type="PANTHER" id="PTHR33202:SF2">
    <property type="entry name" value="FERRIC UPTAKE REGULATION PROTEIN"/>
    <property type="match status" value="1"/>
</dbReference>
<dbReference type="PANTHER" id="PTHR33202">
    <property type="entry name" value="ZINC UPTAKE REGULATION PROTEIN"/>
    <property type="match status" value="1"/>
</dbReference>
<dbReference type="Pfam" id="PF01475">
    <property type="entry name" value="FUR"/>
    <property type="match status" value="1"/>
</dbReference>
<dbReference type="SUPFAM" id="SSF46785">
    <property type="entry name" value="Winged helix' DNA-binding domain"/>
    <property type="match status" value="1"/>
</dbReference>
<sequence>MEKFNNIAQLKDSGLKVTGPRLKILDLFETHAEEHLSAEDVYRILLEEGVEIGVATIYRVLTQFEQAGILQRHHFETGKAVYELDKGDHHDHIVCVKCGEVTEFHNPEIEALQDKIAEENGYRIVDHALYMYGVCSDCQAKGKR</sequence>